<feature type="chain" id="PRO_0000347423" description="Urease accessory protein UreG">
    <location>
        <begin position="1"/>
        <end position="207"/>
    </location>
</feature>
<feature type="binding site" evidence="1">
    <location>
        <begin position="14"/>
        <end position="21"/>
    </location>
    <ligand>
        <name>GTP</name>
        <dbReference type="ChEBI" id="CHEBI:37565"/>
    </ligand>
</feature>
<protein>
    <recommendedName>
        <fullName evidence="1">Urease accessory protein UreG</fullName>
    </recommendedName>
</protein>
<gene>
    <name evidence="1" type="primary">ureG</name>
    <name type="ordered locus">PSEEN2100</name>
</gene>
<accession>Q1IBN6</accession>
<name>UREG_PSEE4</name>
<proteinExistence type="inferred from homology"/>
<comment type="function">
    <text evidence="1">Facilitates the functional incorporation of the urease nickel metallocenter. This process requires GTP hydrolysis, probably effectuated by UreG.</text>
</comment>
<comment type="subunit">
    <text evidence="1">Homodimer. UreD, UreF and UreG form a complex that acts as a GTP-hydrolysis-dependent molecular chaperone, activating the urease apoprotein by helping to assemble the nickel containing metallocenter of UreC. The UreE protein probably delivers the nickel.</text>
</comment>
<comment type="subcellular location">
    <subcellularLocation>
        <location evidence="1">Cytoplasm</location>
    </subcellularLocation>
</comment>
<comment type="similarity">
    <text evidence="1">Belongs to the SIMIBI class G3E GTPase family. UreG subfamily.</text>
</comment>
<organism>
    <name type="scientific">Pseudomonas entomophila (strain L48)</name>
    <dbReference type="NCBI Taxonomy" id="384676"/>
    <lineage>
        <taxon>Bacteria</taxon>
        <taxon>Pseudomonadati</taxon>
        <taxon>Pseudomonadota</taxon>
        <taxon>Gammaproteobacteria</taxon>
        <taxon>Pseudomonadales</taxon>
        <taxon>Pseudomonadaceae</taxon>
        <taxon>Pseudomonas</taxon>
    </lineage>
</organism>
<reference key="1">
    <citation type="journal article" date="2006" name="Nat. Biotechnol.">
        <title>Complete genome sequence of the entomopathogenic and metabolically versatile soil bacterium Pseudomonas entomophila.</title>
        <authorList>
            <person name="Vodovar N."/>
            <person name="Vallenet D."/>
            <person name="Cruveiller S."/>
            <person name="Rouy Z."/>
            <person name="Barbe V."/>
            <person name="Acosta C."/>
            <person name="Cattolico L."/>
            <person name="Jubin C."/>
            <person name="Lajus A."/>
            <person name="Segurens B."/>
            <person name="Vacherie B."/>
            <person name="Wincker P."/>
            <person name="Weissenbach J."/>
            <person name="Lemaitre B."/>
            <person name="Medigue C."/>
            <person name="Boccard F."/>
        </authorList>
    </citation>
    <scope>NUCLEOTIDE SEQUENCE [LARGE SCALE GENOMIC DNA]</scope>
    <source>
        <strain>L48</strain>
    </source>
</reference>
<sequence length="207" mass="22450">MQNYQQPLRVGVGGPVGSGKTALLEALCKAMRDHYQIAVVTNDIYTKEDQRILTEAGALEPERIVGVETGGCPHTAIREDASMNLAAVEALAKKFGNLEVIFVESGGDNLSATFSPELADLTIYVIDVAEGEKIPRKGGPGITKSDFLVINKTDLAPYVGASLEVMERDTERMRPERPWTFSNLKKGEGLQAVIDFIVERGMLGVRG</sequence>
<keyword id="KW-0143">Chaperone</keyword>
<keyword id="KW-0963">Cytoplasm</keyword>
<keyword id="KW-0342">GTP-binding</keyword>
<keyword id="KW-0996">Nickel insertion</keyword>
<keyword id="KW-0547">Nucleotide-binding</keyword>
<evidence type="ECO:0000255" key="1">
    <source>
        <dbReference type="HAMAP-Rule" id="MF_01389"/>
    </source>
</evidence>
<dbReference type="EMBL" id="CT573326">
    <property type="protein sequence ID" value="CAK14929.1"/>
    <property type="molecule type" value="Genomic_DNA"/>
</dbReference>
<dbReference type="RefSeq" id="WP_011533332.1">
    <property type="nucleotide sequence ID" value="NC_008027.1"/>
</dbReference>
<dbReference type="SMR" id="Q1IBN6"/>
<dbReference type="STRING" id="384676.PSEEN2100"/>
<dbReference type="GeneID" id="32805308"/>
<dbReference type="KEGG" id="pen:PSEEN2100"/>
<dbReference type="eggNOG" id="COG0378">
    <property type="taxonomic scope" value="Bacteria"/>
</dbReference>
<dbReference type="HOGENOM" id="CLU_072144_1_0_6"/>
<dbReference type="OrthoDB" id="9802035at2"/>
<dbReference type="Proteomes" id="UP000000658">
    <property type="component" value="Chromosome"/>
</dbReference>
<dbReference type="GO" id="GO:0005737">
    <property type="term" value="C:cytoplasm"/>
    <property type="evidence" value="ECO:0007669"/>
    <property type="project" value="UniProtKB-SubCell"/>
</dbReference>
<dbReference type="GO" id="GO:0005525">
    <property type="term" value="F:GTP binding"/>
    <property type="evidence" value="ECO:0007669"/>
    <property type="project" value="UniProtKB-KW"/>
</dbReference>
<dbReference type="GO" id="GO:0003924">
    <property type="term" value="F:GTPase activity"/>
    <property type="evidence" value="ECO:0007669"/>
    <property type="project" value="InterPro"/>
</dbReference>
<dbReference type="GO" id="GO:0016151">
    <property type="term" value="F:nickel cation binding"/>
    <property type="evidence" value="ECO:0007669"/>
    <property type="project" value="UniProtKB-UniRule"/>
</dbReference>
<dbReference type="GO" id="GO:0043419">
    <property type="term" value="P:urea catabolic process"/>
    <property type="evidence" value="ECO:0007669"/>
    <property type="project" value="InterPro"/>
</dbReference>
<dbReference type="CDD" id="cd05540">
    <property type="entry name" value="UreG"/>
    <property type="match status" value="1"/>
</dbReference>
<dbReference type="FunFam" id="3.40.50.300:FF:000208">
    <property type="entry name" value="Urease accessory protein UreG"/>
    <property type="match status" value="1"/>
</dbReference>
<dbReference type="Gene3D" id="3.40.50.300">
    <property type="entry name" value="P-loop containing nucleotide triphosphate hydrolases"/>
    <property type="match status" value="1"/>
</dbReference>
<dbReference type="HAMAP" id="MF_01389">
    <property type="entry name" value="UreG"/>
    <property type="match status" value="1"/>
</dbReference>
<dbReference type="InterPro" id="IPR003495">
    <property type="entry name" value="CobW/HypB/UreG_nucleotide-bd"/>
</dbReference>
<dbReference type="InterPro" id="IPR027417">
    <property type="entry name" value="P-loop_NTPase"/>
</dbReference>
<dbReference type="InterPro" id="IPR004400">
    <property type="entry name" value="UreG"/>
</dbReference>
<dbReference type="NCBIfam" id="TIGR00101">
    <property type="entry name" value="ureG"/>
    <property type="match status" value="1"/>
</dbReference>
<dbReference type="PANTHER" id="PTHR31715">
    <property type="entry name" value="UREASE ACCESSORY PROTEIN G"/>
    <property type="match status" value="1"/>
</dbReference>
<dbReference type="PANTHER" id="PTHR31715:SF0">
    <property type="entry name" value="UREASE ACCESSORY PROTEIN G"/>
    <property type="match status" value="1"/>
</dbReference>
<dbReference type="Pfam" id="PF02492">
    <property type="entry name" value="cobW"/>
    <property type="match status" value="1"/>
</dbReference>
<dbReference type="PIRSF" id="PIRSF005624">
    <property type="entry name" value="Ni-bind_GTPase"/>
    <property type="match status" value="1"/>
</dbReference>
<dbReference type="SUPFAM" id="SSF52540">
    <property type="entry name" value="P-loop containing nucleoside triphosphate hydrolases"/>
    <property type="match status" value="1"/>
</dbReference>